<gene>
    <name evidence="4" type="primary">cpaO</name>
    <name evidence="6" type="ORF">AFLA_139470</name>
</gene>
<feature type="signal peptide" evidence="1">
    <location>
        <begin position="1"/>
        <end position="20"/>
    </location>
</feature>
<feature type="chain" id="PRO_0000430693" description="Beta-cyclopiazonate dehydrogenase">
    <location>
        <begin position="21"/>
        <end position="455"/>
    </location>
</feature>
<reference key="1">
    <citation type="journal article" date="2009" name="Bioorg. Med. Chem. Lett.">
        <title>Functional expression of the Aspergillus flavus PKS-NRPS hybrid CpaA involved in the biosynthesis of cyclopiazonic acid.</title>
        <authorList>
            <person name="Seshime Y."/>
            <person name="Juvvadi P.R."/>
            <person name="Tokuoka M."/>
            <person name="Koyama Y."/>
            <person name="Kitamoto K."/>
            <person name="Ebizuka Y."/>
            <person name="Fujii I."/>
        </authorList>
    </citation>
    <scope>NUCLEOTIDE SEQUENCE [GENOMIC DNA]</scope>
    <scope>FUNCTION</scope>
    <scope>CATALYTIC ACTIVITY</scope>
    <scope>COFACTOR</scope>
    <source>
        <strain>ATCC 200026 / FGSC A1120 / IAM 13836 / NRRL 3357 / JCM 12722 / SRRC 167</strain>
    </source>
</reference>
<reference key="2">
    <citation type="journal article" date="2015" name="Genome Announc.">
        <title>Genome sequence of Aspergillus flavus NRRL 3357, a strain that causes aflatoxin contamination of food and feed.</title>
        <authorList>
            <person name="Nierman W.C."/>
            <person name="Yu J."/>
            <person name="Fedorova-Abrams N.D."/>
            <person name="Losada L."/>
            <person name="Cleveland T.E."/>
            <person name="Bhatnagar D."/>
            <person name="Bennett J.W."/>
            <person name="Dean R."/>
            <person name="Payne G.A."/>
        </authorList>
    </citation>
    <scope>NUCLEOTIDE SEQUENCE [LARGE SCALE GENOMIC DNA]</scope>
    <source>
        <strain>ATCC 200026 / FGSC A1120 / IAM 13836 / NRRL 3357 / JCM 12722 / SRRC 167</strain>
    </source>
</reference>
<reference key="3">
    <citation type="journal article" date="2009" name="Biochemistry">
        <title>Cyclopiazonic acid biosynthesis in Aspergillus sp.: characterization of a reductase-like R* domain in cyclopiazonate synthetase that forms and releases cyclo-acetoacetyl-L-tryptophan.</title>
        <authorList>
            <person name="Liu X."/>
            <person name="Walsh C.T."/>
        </authorList>
    </citation>
    <scope>FUNCTION</scope>
    <scope>CATALYTIC ACTIVITY</scope>
</reference>
<comment type="function">
    <text evidence="2 3">Beta-cyclopiazonate dehydrogenase involved in the synthesis of the fungal neurotoxin alpha-cyclopiazonic acid (CPA). CpaO carries out the dehydrogenation of beta-CPA to yield an unstable enimine product, which is captured by intramolecular cyclization to create the pentacyclic fused scaffold of alpha-cyclopiazonate.</text>
</comment>
<comment type="catalytic activity">
    <reaction evidence="2 3">
        <text>beta-cyclopiazonate + A = alpha-cyclopiazonate + AH2</text>
        <dbReference type="Rhea" id="RHEA:14525"/>
        <dbReference type="ChEBI" id="CHEBI:13193"/>
        <dbReference type="ChEBI" id="CHEBI:17499"/>
        <dbReference type="ChEBI" id="CHEBI:58067"/>
        <dbReference type="ChEBI" id="CHEBI:58256"/>
        <dbReference type="EC" id="1.21.99.1"/>
    </reaction>
</comment>
<comment type="cofactor">
    <cofactor evidence="2">
        <name>FAD</name>
        <dbReference type="ChEBI" id="CHEBI:57692"/>
    </cofactor>
</comment>
<comment type="similarity">
    <text evidence="5">Belongs to the beta-cyclopiazonate dehydrogenase family.</text>
</comment>
<sequence>MATRIASFIGISTVASLALANGINVPDTISRDVIILGAGSSGTYAAIRLKDEGKTVAVVERNDYLGGHGETYYTEDNTPLNFGVEGFFNTSVTRNYLERLQVPYGRRNPAPAHEDYVNLNTGQRTEYPPGQLQDREAFAKWVDAISQFGFLDDGVYRITEPVPEDLIIPFADFVKKYHLEDAVYALFSHTSGDVLEMITLYVIQYIGIPHAAALNEGYVRPIEGIAALYKSAGKELGSDVLLKTTPESVQRSKDGVEVTVRSADGTKTLLKGKQLLVTIPPLLENLHGFPLSDQESRIFSKWQYHQYWAALVNDTGLPDDVNIVNVDTERLYGVPEEPFIWRLDNHWAPGYHNIKLVGGSDFGEDEAKAYMYEKLDLLHEEGTYSTHKPEIVKFASHTPVTMFVSAEEIRGGFYRQLYELQGLNSTFWTGATWASDYSTLLWGYTDEVLDQMASS</sequence>
<evidence type="ECO:0000255" key="1"/>
<evidence type="ECO:0000269" key="2">
    <source>
    </source>
</evidence>
<evidence type="ECO:0000269" key="3">
    <source>
    </source>
</evidence>
<evidence type="ECO:0000303" key="4">
    <source>
    </source>
</evidence>
<evidence type="ECO:0000305" key="5"/>
<evidence type="ECO:0000312" key="6">
    <source>
        <dbReference type="EMBL" id="EED51181.1"/>
    </source>
</evidence>
<name>CPAO_ASPFN</name>
<keyword id="KW-0274">FAD</keyword>
<keyword id="KW-0285">Flavoprotein</keyword>
<keyword id="KW-0560">Oxidoreductase</keyword>
<keyword id="KW-0732">Signal</keyword>
<keyword id="KW-0843">Virulence</keyword>
<organism>
    <name type="scientific">Aspergillus flavus (strain ATCC 200026 / FGSC A1120 / IAM 13836 / NRRL 3357 / JCM 12722 / SRRC 167)</name>
    <dbReference type="NCBI Taxonomy" id="332952"/>
    <lineage>
        <taxon>Eukaryota</taxon>
        <taxon>Fungi</taxon>
        <taxon>Dikarya</taxon>
        <taxon>Ascomycota</taxon>
        <taxon>Pezizomycotina</taxon>
        <taxon>Eurotiomycetes</taxon>
        <taxon>Eurotiomycetidae</taxon>
        <taxon>Eurotiales</taxon>
        <taxon>Aspergillaceae</taxon>
        <taxon>Aspergillus</taxon>
        <taxon>Aspergillus subgen. Circumdati</taxon>
    </lineage>
</organism>
<dbReference type="EC" id="1.21.99.1" evidence="2 3"/>
<dbReference type="EMBL" id="EQ963478">
    <property type="protein sequence ID" value="EED51181.1"/>
    <property type="molecule type" value="Genomic_DNA"/>
</dbReference>
<dbReference type="EMBL" id="AB493825">
    <property type="protein sequence ID" value="BAI43679.1"/>
    <property type="molecule type" value="Genomic_DNA"/>
</dbReference>
<dbReference type="RefSeq" id="XP_002379957.1">
    <property type="nucleotide sequence ID" value="XM_002379916.1"/>
</dbReference>
<dbReference type="SMR" id="B8NI10"/>
<dbReference type="STRING" id="332952.B8NI10"/>
<dbReference type="EnsemblFungi" id="EED51181">
    <property type="protein sequence ID" value="EED51181"/>
    <property type="gene ID" value="AFLA_139470"/>
</dbReference>
<dbReference type="VEuPathDB" id="FungiDB:AFLA_006317"/>
<dbReference type="eggNOG" id="ENOG502R1TU">
    <property type="taxonomic scope" value="Eukaryota"/>
</dbReference>
<dbReference type="HOGENOM" id="CLU_028280_0_0_1"/>
<dbReference type="OMA" id="LTWAPDY"/>
<dbReference type="GO" id="GO:0050448">
    <property type="term" value="F:beta-cyclopiazonate dehydrogenase activity"/>
    <property type="evidence" value="ECO:0007669"/>
    <property type="project" value="UniProtKB-EC"/>
</dbReference>
<dbReference type="Gene3D" id="1.10.405.20">
    <property type="match status" value="1"/>
</dbReference>
<dbReference type="Gene3D" id="3.30.70.1990">
    <property type="match status" value="1"/>
</dbReference>
<dbReference type="Gene3D" id="3.50.50.60">
    <property type="entry name" value="FAD/NAD(P)-binding domain"/>
    <property type="match status" value="1"/>
</dbReference>
<dbReference type="InterPro" id="IPR002937">
    <property type="entry name" value="Amino_oxidase"/>
</dbReference>
<dbReference type="InterPro" id="IPR036188">
    <property type="entry name" value="FAD/NAD-bd_sf"/>
</dbReference>
<dbReference type="Pfam" id="PF01593">
    <property type="entry name" value="Amino_oxidase"/>
    <property type="match status" value="1"/>
</dbReference>
<dbReference type="SUPFAM" id="SSF51905">
    <property type="entry name" value="FAD/NAD(P)-binding domain"/>
    <property type="match status" value="1"/>
</dbReference>
<proteinExistence type="evidence at protein level"/>
<accession>B8NI10</accession>
<accession>C9K4U3</accession>
<protein>
    <recommendedName>
        <fullName evidence="5">Beta-cyclopiazonate dehydrogenase</fullName>
        <ecNumber evidence="2 3">1.21.99.1</ecNumber>
    </recommendedName>
    <alternativeName>
        <fullName evidence="5">Beta-Cyclopiazonate oxidocyclase</fullName>
    </alternativeName>
    <alternativeName>
        <fullName evidence="5">FAD-dependent oxidoreductase cpaO</fullName>
    </alternativeName>
</protein>